<reference key="1">
    <citation type="journal article" date="2008" name="Environ. Microbiol.">
        <title>The complete genome sequence of Moorella thermoacetica (f. Clostridium thermoaceticum).</title>
        <authorList>
            <person name="Pierce E."/>
            <person name="Xie G."/>
            <person name="Barabote R.D."/>
            <person name="Saunders E."/>
            <person name="Han C.S."/>
            <person name="Detter J.C."/>
            <person name="Richardson P."/>
            <person name="Brettin T.S."/>
            <person name="Das A."/>
            <person name="Ljungdahl L.G."/>
            <person name="Ragsdale S.W."/>
        </authorList>
    </citation>
    <scope>NUCLEOTIDE SEQUENCE [LARGE SCALE GENOMIC DNA]</scope>
    <source>
        <strain>ATCC 39073 / JCM 9320</strain>
    </source>
</reference>
<sequence>MNLETVAKVDPEIVAAVRGELQRQRTHLELIASENFVSQAVMEAYSCVLTNKYAEGYPGKRYYGGCEWADVVENLARERAKALFGAEHANVQPHSGSQANTAVYLAVLNPGDKALGMNLAHGGHLTHGSPVSLSGKYYNFCFYGVDAKTGRIDYDAVARIAREERPRLIVAGASAYPRVIDFARFREIADEVGALLMVDMAHIAGLVAAGIHPNPVPYAHFVTTTTHKTMRGPRGGIILTTREYARDIDKAVFPGVQGGPLMHVIAAKAVALKEAMLPEFKRYQEQIVTNARTLADALMGYGFNLVSGGTDNHLMLVDLRNKNITGREAEDILASVQITVNKNAIPFDPQKPSVTSGIRLGTAALTSRGMDADAMVQVARAIDLALSYGPDEKKLEEARGIVAELCRAFPLYQELD</sequence>
<comment type="function">
    <text evidence="1">Catalyzes the reversible interconversion of serine and glycine with tetrahydrofolate (THF) serving as the one-carbon carrier. This reaction serves as the major source of one-carbon groups required for the biosynthesis of purines, thymidylate, methionine, and other important biomolecules. Also exhibits THF-independent aldolase activity toward beta-hydroxyamino acids, producing glycine and aldehydes, via a retro-aldol mechanism.</text>
</comment>
<comment type="catalytic activity">
    <reaction evidence="1">
        <text>(6R)-5,10-methylene-5,6,7,8-tetrahydrofolate + glycine + H2O = (6S)-5,6,7,8-tetrahydrofolate + L-serine</text>
        <dbReference type="Rhea" id="RHEA:15481"/>
        <dbReference type="ChEBI" id="CHEBI:15377"/>
        <dbReference type="ChEBI" id="CHEBI:15636"/>
        <dbReference type="ChEBI" id="CHEBI:33384"/>
        <dbReference type="ChEBI" id="CHEBI:57305"/>
        <dbReference type="ChEBI" id="CHEBI:57453"/>
        <dbReference type="EC" id="2.1.2.1"/>
    </reaction>
</comment>
<comment type="cofactor">
    <cofactor evidence="1">
        <name>pyridoxal 5'-phosphate</name>
        <dbReference type="ChEBI" id="CHEBI:597326"/>
    </cofactor>
</comment>
<comment type="pathway">
    <text evidence="1">One-carbon metabolism; tetrahydrofolate interconversion.</text>
</comment>
<comment type="pathway">
    <text evidence="1">Amino-acid biosynthesis; glycine biosynthesis; glycine from L-serine: step 1/1.</text>
</comment>
<comment type="subunit">
    <text evidence="1">Homodimer.</text>
</comment>
<comment type="subcellular location">
    <subcellularLocation>
        <location evidence="1">Cytoplasm</location>
    </subcellularLocation>
</comment>
<comment type="similarity">
    <text evidence="1">Belongs to the SHMT family.</text>
</comment>
<name>GLYA_MOOTA</name>
<dbReference type="EC" id="2.1.2.1" evidence="1"/>
<dbReference type="EMBL" id="CP000232">
    <property type="protein sequence ID" value="ABC20672.1"/>
    <property type="molecule type" value="Genomic_DNA"/>
</dbReference>
<dbReference type="RefSeq" id="YP_431215.1">
    <property type="nucleotide sequence ID" value="NC_007644.1"/>
</dbReference>
<dbReference type="SMR" id="Q2RFW7"/>
<dbReference type="STRING" id="264732.Moth_2390"/>
<dbReference type="EnsemblBacteria" id="ABC20672">
    <property type="protein sequence ID" value="ABC20672"/>
    <property type="gene ID" value="Moth_2390"/>
</dbReference>
<dbReference type="KEGG" id="mta:Moth_2390"/>
<dbReference type="PATRIC" id="fig|264732.11.peg.2603"/>
<dbReference type="eggNOG" id="COG0112">
    <property type="taxonomic scope" value="Bacteria"/>
</dbReference>
<dbReference type="HOGENOM" id="CLU_022477_2_1_9"/>
<dbReference type="OrthoDB" id="9803846at2"/>
<dbReference type="UniPathway" id="UPA00193"/>
<dbReference type="UniPathway" id="UPA00288">
    <property type="reaction ID" value="UER01023"/>
</dbReference>
<dbReference type="GO" id="GO:0005829">
    <property type="term" value="C:cytosol"/>
    <property type="evidence" value="ECO:0007669"/>
    <property type="project" value="TreeGrafter"/>
</dbReference>
<dbReference type="GO" id="GO:0004372">
    <property type="term" value="F:glycine hydroxymethyltransferase activity"/>
    <property type="evidence" value="ECO:0007669"/>
    <property type="project" value="UniProtKB-UniRule"/>
</dbReference>
<dbReference type="GO" id="GO:0030170">
    <property type="term" value="F:pyridoxal phosphate binding"/>
    <property type="evidence" value="ECO:0007669"/>
    <property type="project" value="UniProtKB-UniRule"/>
</dbReference>
<dbReference type="GO" id="GO:0019264">
    <property type="term" value="P:glycine biosynthetic process from serine"/>
    <property type="evidence" value="ECO:0007669"/>
    <property type="project" value="UniProtKB-UniRule"/>
</dbReference>
<dbReference type="GO" id="GO:0035999">
    <property type="term" value="P:tetrahydrofolate interconversion"/>
    <property type="evidence" value="ECO:0007669"/>
    <property type="project" value="UniProtKB-UniRule"/>
</dbReference>
<dbReference type="CDD" id="cd00378">
    <property type="entry name" value="SHMT"/>
    <property type="match status" value="1"/>
</dbReference>
<dbReference type="FunFam" id="3.40.640.10:FF:000001">
    <property type="entry name" value="Serine hydroxymethyltransferase"/>
    <property type="match status" value="1"/>
</dbReference>
<dbReference type="Gene3D" id="3.90.1150.10">
    <property type="entry name" value="Aspartate Aminotransferase, domain 1"/>
    <property type="match status" value="1"/>
</dbReference>
<dbReference type="Gene3D" id="3.40.640.10">
    <property type="entry name" value="Type I PLP-dependent aspartate aminotransferase-like (Major domain)"/>
    <property type="match status" value="1"/>
</dbReference>
<dbReference type="HAMAP" id="MF_00051">
    <property type="entry name" value="SHMT"/>
    <property type="match status" value="1"/>
</dbReference>
<dbReference type="InterPro" id="IPR015424">
    <property type="entry name" value="PyrdxlP-dep_Trfase"/>
</dbReference>
<dbReference type="InterPro" id="IPR015421">
    <property type="entry name" value="PyrdxlP-dep_Trfase_major"/>
</dbReference>
<dbReference type="InterPro" id="IPR015422">
    <property type="entry name" value="PyrdxlP-dep_Trfase_small"/>
</dbReference>
<dbReference type="InterPro" id="IPR001085">
    <property type="entry name" value="Ser_HO-MeTrfase"/>
</dbReference>
<dbReference type="InterPro" id="IPR049943">
    <property type="entry name" value="Ser_HO-MeTrfase-like"/>
</dbReference>
<dbReference type="InterPro" id="IPR019798">
    <property type="entry name" value="Ser_HO-MeTrfase_PLP_BS"/>
</dbReference>
<dbReference type="InterPro" id="IPR039429">
    <property type="entry name" value="SHMT-like_dom"/>
</dbReference>
<dbReference type="NCBIfam" id="NF000586">
    <property type="entry name" value="PRK00011.1"/>
    <property type="match status" value="1"/>
</dbReference>
<dbReference type="PANTHER" id="PTHR11680">
    <property type="entry name" value="SERINE HYDROXYMETHYLTRANSFERASE"/>
    <property type="match status" value="1"/>
</dbReference>
<dbReference type="PANTHER" id="PTHR11680:SF35">
    <property type="entry name" value="SERINE HYDROXYMETHYLTRANSFERASE 1"/>
    <property type="match status" value="1"/>
</dbReference>
<dbReference type="Pfam" id="PF00464">
    <property type="entry name" value="SHMT"/>
    <property type="match status" value="1"/>
</dbReference>
<dbReference type="PIRSF" id="PIRSF000412">
    <property type="entry name" value="SHMT"/>
    <property type="match status" value="1"/>
</dbReference>
<dbReference type="SUPFAM" id="SSF53383">
    <property type="entry name" value="PLP-dependent transferases"/>
    <property type="match status" value="1"/>
</dbReference>
<dbReference type="PROSITE" id="PS00096">
    <property type="entry name" value="SHMT"/>
    <property type="match status" value="1"/>
</dbReference>
<evidence type="ECO:0000255" key="1">
    <source>
        <dbReference type="HAMAP-Rule" id="MF_00051"/>
    </source>
</evidence>
<accession>Q2RFW7</accession>
<proteinExistence type="inferred from homology"/>
<protein>
    <recommendedName>
        <fullName evidence="1">Serine hydroxymethyltransferase</fullName>
        <shortName evidence="1">SHMT</shortName>
        <shortName evidence="1">Serine methylase</shortName>
        <ecNumber evidence="1">2.1.2.1</ecNumber>
    </recommendedName>
</protein>
<gene>
    <name evidence="1" type="primary">glyA</name>
    <name type="ordered locus">Moth_2390</name>
</gene>
<organism>
    <name type="scientific">Moorella thermoacetica (strain ATCC 39073 / JCM 9320)</name>
    <dbReference type="NCBI Taxonomy" id="264732"/>
    <lineage>
        <taxon>Bacteria</taxon>
        <taxon>Bacillati</taxon>
        <taxon>Bacillota</taxon>
        <taxon>Clostridia</taxon>
        <taxon>Moorellales</taxon>
        <taxon>Moorellaceae</taxon>
        <taxon>Moorella</taxon>
    </lineage>
</organism>
<keyword id="KW-0028">Amino-acid biosynthesis</keyword>
<keyword id="KW-0963">Cytoplasm</keyword>
<keyword id="KW-0554">One-carbon metabolism</keyword>
<keyword id="KW-0663">Pyridoxal phosphate</keyword>
<keyword id="KW-0808">Transferase</keyword>
<feature type="chain" id="PRO_0000234986" description="Serine hydroxymethyltransferase">
    <location>
        <begin position="1"/>
        <end position="416"/>
    </location>
</feature>
<feature type="binding site" evidence="1">
    <location>
        <position position="119"/>
    </location>
    <ligand>
        <name>(6S)-5,6,7,8-tetrahydrofolate</name>
        <dbReference type="ChEBI" id="CHEBI:57453"/>
    </ligand>
</feature>
<feature type="binding site" evidence="1">
    <location>
        <begin position="123"/>
        <end position="125"/>
    </location>
    <ligand>
        <name>(6S)-5,6,7,8-tetrahydrofolate</name>
        <dbReference type="ChEBI" id="CHEBI:57453"/>
    </ligand>
</feature>
<feature type="site" description="Plays an important role in substrate specificity" evidence="1">
    <location>
        <position position="227"/>
    </location>
</feature>
<feature type="modified residue" description="N6-(pyridoxal phosphate)lysine" evidence="1">
    <location>
        <position position="228"/>
    </location>
</feature>